<comment type="similarity">
    <text evidence="1">Belongs to the elongation factor P family.</text>
</comment>
<sequence>MPKASDIKKNQAIEHNGKVYLIKDVYKSTSQGRAGGSIYRVRMYEVATGLKVDESFKADEMITLADFSRHQATFSYVDGDEYVFMDNEDYTPYNLHKDAIAEELPFVTETTEGIQVFTVNGQPVAIDLPASVDLVIVETDPSIKGASATARTKPATLSTGLVIQVPEYIASGEKIKVSTVDHKFMSRA</sequence>
<name>EFPL_SACD2</name>
<organism>
    <name type="scientific">Saccharophagus degradans (strain 2-40 / ATCC 43961 / DSM 17024)</name>
    <dbReference type="NCBI Taxonomy" id="203122"/>
    <lineage>
        <taxon>Bacteria</taxon>
        <taxon>Pseudomonadati</taxon>
        <taxon>Pseudomonadota</taxon>
        <taxon>Gammaproteobacteria</taxon>
        <taxon>Cellvibrionales</taxon>
        <taxon>Cellvibrionaceae</taxon>
        <taxon>Saccharophagus</taxon>
    </lineage>
</organism>
<evidence type="ECO:0000255" key="1">
    <source>
        <dbReference type="HAMAP-Rule" id="MF_00646"/>
    </source>
</evidence>
<proteinExistence type="inferred from homology"/>
<protein>
    <recommendedName>
        <fullName evidence="1">Elongation factor P-like protein</fullName>
    </recommendedName>
</protein>
<feature type="chain" id="PRO_0000384920" description="Elongation factor P-like protein">
    <location>
        <begin position="1"/>
        <end position="188"/>
    </location>
</feature>
<reference key="1">
    <citation type="journal article" date="2008" name="PLoS Genet.">
        <title>Complete genome sequence of the complex carbohydrate-degrading marine bacterium, Saccharophagus degradans strain 2-40 T.</title>
        <authorList>
            <person name="Weiner R.M."/>
            <person name="Taylor L.E. II"/>
            <person name="Henrissat B."/>
            <person name="Hauser L."/>
            <person name="Land M."/>
            <person name="Coutinho P.M."/>
            <person name="Rancurel C."/>
            <person name="Saunders E.H."/>
            <person name="Longmire A.G."/>
            <person name="Zhang H."/>
            <person name="Bayer E.A."/>
            <person name="Gilbert H.J."/>
            <person name="Larimer F."/>
            <person name="Zhulin I.B."/>
            <person name="Ekborg N.A."/>
            <person name="Lamed R."/>
            <person name="Richardson P.M."/>
            <person name="Borovok I."/>
            <person name="Hutcheson S."/>
        </authorList>
    </citation>
    <scope>NUCLEOTIDE SEQUENCE [LARGE SCALE GENOMIC DNA]</scope>
    <source>
        <strain>2-40 / ATCC 43961 / DSM 17024</strain>
    </source>
</reference>
<keyword id="KW-1185">Reference proteome</keyword>
<gene>
    <name type="ordered locus">Sde_2821</name>
</gene>
<accession>Q21GV1</accession>
<dbReference type="EMBL" id="CP000282">
    <property type="protein sequence ID" value="ABD82078.1"/>
    <property type="molecule type" value="Genomic_DNA"/>
</dbReference>
<dbReference type="RefSeq" id="WP_011469294.1">
    <property type="nucleotide sequence ID" value="NC_007912.1"/>
</dbReference>
<dbReference type="SMR" id="Q21GV1"/>
<dbReference type="STRING" id="203122.Sde_2821"/>
<dbReference type="GeneID" id="98614474"/>
<dbReference type="KEGG" id="sde:Sde_2821"/>
<dbReference type="eggNOG" id="COG0231">
    <property type="taxonomic scope" value="Bacteria"/>
</dbReference>
<dbReference type="HOGENOM" id="CLU_074944_2_0_6"/>
<dbReference type="OrthoDB" id="9801844at2"/>
<dbReference type="Proteomes" id="UP000001947">
    <property type="component" value="Chromosome"/>
</dbReference>
<dbReference type="GO" id="GO:0005737">
    <property type="term" value="C:cytoplasm"/>
    <property type="evidence" value="ECO:0007669"/>
    <property type="project" value="InterPro"/>
</dbReference>
<dbReference type="GO" id="GO:0003746">
    <property type="term" value="F:translation elongation factor activity"/>
    <property type="evidence" value="ECO:0007669"/>
    <property type="project" value="UniProtKB-UniRule"/>
</dbReference>
<dbReference type="GO" id="GO:0043043">
    <property type="term" value="P:peptide biosynthetic process"/>
    <property type="evidence" value="ECO:0007669"/>
    <property type="project" value="InterPro"/>
</dbReference>
<dbReference type="CDD" id="cd04470">
    <property type="entry name" value="S1_EF-P_repeat_1"/>
    <property type="match status" value="1"/>
</dbReference>
<dbReference type="CDD" id="cd05794">
    <property type="entry name" value="S1_EF-P_repeat_2"/>
    <property type="match status" value="1"/>
</dbReference>
<dbReference type="FunFam" id="2.40.50.140:FF:000004">
    <property type="entry name" value="Elongation factor P"/>
    <property type="match status" value="1"/>
</dbReference>
<dbReference type="Gene3D" id="2.30.30.30">
    <property type="match status" value="1"/>
</dbReference>
<dbReference type="Gene3D" id="2.40.50.140">
    <property type="entry name" value="Nucleic acid-binding proteins"/>
    <property type="match status" value="2"/>
</dbReference>
<dbReference type="HAMAP" id="MF_00646">
    <property type="entry name" value="EFP"/>
    <property type="match status" value="1"/>
</dbReference>
<dbReference type="InterPro" id="IPR015365">
    <property type="entry name" value="Elong-fact-P_C"/>
</dbReference>
<dbReference type="InterPro" id="IPR012340">
    <property type="entry name" value="NA-bd_OB-fold"/>
</dbReference>
<dbReference type="InterPro" id="IPR014722">
    <property type="entry name" value="Rib_uL2_dom2"/>
</dbReference>
<dbReference type="InterPro" id="IPR020599">
    <property type="entry name" value="Transl_elong_fac_P/YeiP"/>
</dbReference>
<dbReference type="InterPro" id="IPR013185">
    <property type="entry name" value="Transl_elong_KOW-like"/>
</dbReference>
<dbReference type="InterPro" id="IPR011897">
    <property type="entry name" value="Transl_elong_p-like_YeiP"/>
</dbReference>
<dbReference type="InterPro" id="IPR001059">
    <property type="entry name" value="Transl_elong_P/YeiP_cen"/>
</dbReference>
<dbReference type="InterPro" id="IPR013852">
    <property type="entry name" value="Transl_elong_P/YeiP_CS"/>
</dbReference>
<dbReference type="InterPro" id="IPR008991">
    <property type="entry name" value="Translation_prot_SH3-like_sf"/>
</dbReference>
<dbReference type="NCBIfam" id="NF001810">
    <property type="entry name" value="PRK00529.1"/>
    <property type="match status" value="1"/>
</dbReference>
<dbReference type="NCBIfam" id="NF003392">
    <property type="entry name" value="PRK04542.1"/>
    <property type="match status" value="1"/>
</dbReference>
<dbReference type="NCBIfam" id="TIGR02178">
    <property type="entry name" value="yeiP"/>
    <property type="match status" value="1"/>
</dbReference>
<dbReference type="PANTHER" id="PTHR30053">
    <property type="entry name" value="ELONGATION FACTOR P"/>
    <property type="match status" value="1"/>
</dbReference>
<dbReference type="PANTHER" id="PTHR30053:SF14">
    <property type="entry name" value="TRANSLATION ELONGATION FACTOR KOW-LIKE DOMAIN-CONTAINING PROTEIN"/>
    <property type="match status" value="1"/>
</dbReference>
<dbReference type="Pfam" id="PF01132">
    <property type="entry name" value="EFP"/>
    <property type="match status" value="1"/>
</dbReference>
<dbReference type="Pfam" id="PF08207">
    <property type="entry name" value="EFP_N"/>
    <property type="match status" value="1"/>
</dbReference>
<dbReference type="Pfam" id="PF09285">
    <property type="entry name" value="Elong-fact-P_C"/>
    <property type="match status" value="1"/>
</dbReference>
<dbReference type="PIRSF" id="PIRSF005901">
    <property type="entry name" value="EF-P"/>
    <property type="match status" value="1"/>
</dbReference>
<dbReference type="SMART" id="SM01185">
    <property type="entry name" value="EFP"/>
    <property type="match status" value="1"/>
</dbReference>
<dbReference type="SMART" id="SM00841">
    <property type="entry name" value="Elong-fact-P_C"/>
    <property type="match status" value="1"/>
</dbReference>
<dbReference type="SUPFAM" id="SSF50249">
    <property type="entry name" value="Nucleic acid-binding proteins"/>
    <property type="match status" value="2"/>
</dbReference>
<dbReference type="SUPFAM" id="SSF50104">
    <property type="entry name" value="Translation proteins SH3-like domain"/>
    <property type="match status" value="1"/>
</dbReference>
<dbReference type="PROSITE" id="PS01275">
    <property type="entry name" value="EFP"/>
    <property type="match status" value="1"/>
</dbReference>